<comment type="function">
    <molecule>Glucagon</molecule>
    <text evidence="6">Plays a key role in glucose metabolism and homeostasis. Regulates blood glucose by increasing gluconeogenesis and decreasing glycolysis. A counterregulatory hormone of insulin, raises plasma glucose levels in response to insulin-induced hypoglycemia. Plays an important role in initiating and maintaining hyperglycemic conditions in diabetes.</text>
</comment>
<comment type="function">
    <molecule>Glucagon-like peptide 1</molecule>
    <text evidence="6">Potent stimulator of glucose-dependent insulin release. Also stimulates insulin release in response to IL6. Plays important roles on gastric motility and the suppression of plasma glucagon levels. May be involved in the suppression of satiety and stimulation of glucose disposal in peripheral tissues, independent of the actions of insulin. Has growth-promoting activities on intestinal epithelium. May also regulate the hypothalamic pituitary axis (HPA) via effects on LH, TSH, CRH, oxytocin, and vasopressin secretion. Increases islet mass through stimulation of islet neogenesis and pancreatic beta cell proliferation. Inhibits beta cell apoptosis.</text>
</comment>
<comment type="function">
    <molecule>Glucagon-like peptide 2</molecule>
    <text evidence="6">Stimulates intestinal growth and up-regulates villus height in the small intestine, concomitant with increased crypt cell proliferation and decreased enterocyte apoptosis. The gastrointestinal tract, from the stomach to the colon is the principal target for GLP-2 action. Plays a key role in nutrient homeostasis, enhancing nutrient assimilation through enhanced gastrointestinal function, as well as increasing nutrient disposal. Stimulates intestinal glucose transport and decreases mucosal permeability.</text>
</comment>
<comment type="function">
    <molecule>Oxyntomodulin</molecule>
    <text evidence="6">Significantly reduces food intake. Inhibits gastric emptying in humans. Suppression of gastric emptying may lead to increased gastric distension, which may contribute to satiety by causing a sensation of fullness.</text>
</comment>
<comment type="function">
    <molecule>Glicentin</molecule>
    <text evidence="6">May modulate gastric acid secretion and the gastro-pyloro-duodenal activity. May play an important role in intestinal mucosal growth in the early period of life.</text>
</comment>
<comment type="subcellular location">
    <subcellularLocation>
        <location evidence="2">Secreted</location>
    </subcellularLocation>
</comment>
<comment type="subcellular location">
    <molecule>Glucagon-like peptide 1</molecule>
    <subcellularLocation>
        <location evidence="2">Secreted</location>
    </subcellularLocation>
</comment>
<comment type="tissue specificity">
    <text evidence="9">Glucagon is secreted in the A cells of the islets of Langerhans. GLP-1, GLP-2, oxyntomodulin and glicentin are secreted from enteroendocrine cells throughout the gastrointestinal tract. GLP-1 and GLP-2 are also secreted in selected neurons in the brain.</text>
</comment>
<comment type="induction">
    <text evidence="1">Glucagon release is stimulated by hypoglycemia and inhibited by hyperglycemia, insulin, and somatostatin. GLP-1 and GLP-2 are induced in response to nutrient ingestion (By similarity).</text>
</comment>
<comment type="PTM">
    <text evidence="1">Proglucagon is post-translationally processed in a tissue-specific manner in pancreatic A cells and intestinal L cells. In pancreatic A cells, the major bioactive hormone is glucagon cleaved by PCSK2/PC2. In the intestinal L cells PCSK1/PC1 liberates GLP-1, GLP-2, glicentin and oxyntomodulin. GLP-1 is further N-terminally truncated by post-translational processing in the intestinal L cells resulting in GLP-1(7-37) GLP-1-(7-36)amide. The C-terminal amidation is neither important for the metabolism of GLP-1 nor for its effects on the endocrine pancreas (By similarity).</text>
</comment>
<comment type="miscellaneous">
    <text>GLP-2 does not have cleavage on a pair of basic residues at C-terminus as in other mammals.</text>
</comment>
<comment type="similarity">
    <text evidence="13">Belongs to the glucagon family.</text>
</comment>
<accession>P01274</accession>
<accession>Q864V8</accession>
<evidence type="ECO:0000250" key="1"/>
<evidence type="ECO:0000250" key="2">
    <source>
        <dbReference type="UniProtKB" id="P01275"/>
    </source>
</evidence>
<evidence type="ECO:0000250" key="3">
    <source>
        <dbReference type="UniProtKB" id="P06883"/>
    </source>
</evidence>
<evidence type="ECO:0000250" key="4">
    <source>
        <dbReference type="UniProtKB" id="P09686"/>
    </source>
</evidence>
<evidence type="ECO:0000250" key="5">
    <source>
        <dbReference type="UniProtKB" id="P15438"/>
    </source>
</evidence>
<evidence type="ECO:0000250" key="6">
    <source>
        <dbReference type="UniProtKB" id="P55095"/>
    </source>
</evidence>
<evidence type="ECO:0000256" key="7">
    <source>
        <dbReference type="SAM" id="MobiDB-lite"/>
    </source>
</evidence>
<evidence type="ECO:0000269" key="8">
    <source>
    </source>
</evidence>
<evidence type="ECO:0000269" key="9">
    <source>
    </source>
</evidence>
<evidence type="ECO:0000269" key="10">
    <source>
    </source>
</evidence>
<evidence type="ECO:0000269" key="11">
    <source>
    </source>
</evidence>
<evidence type="ECO:0000269" key="12">
    <source ref="4"/>
</evidence>
<evidence type="ECO:0000305" key="13"/>
<evidence type="ECO:0007829" key="14">
    <source>
        <dbReference type="PDB" id="1GCN"/>
    </source>
</evidence>
<protein>
    <recommendedName>
        <fullName>Pro-glucagon</fullName>
    </recommendedName>
    <component>
        <recommendedName>
            <fullName>Glicentin</fullName>
        </recommendedName>
    </component>
    <component>
        <recommendedName>
            <fullName>Glicentin-related polypeptide</fullName>
            <shortName>GRPP</shortName>
        </recommendedName>
    </component>
    <component>
        <recommendedName>
            <fullName>Oxyntomodulin</fullName>
            <shortName>OXM</shortName>
            <shortName>OXY</shortName>
        </recommendedName>
    </component>
    <component>
        <recommendedName>
            <fullName>Glucagon</fullName>
        </recommendedName>
    </component>
    <component>
        <recommendedName>
            <fullName>Glucagon-like peptide 1</fullName>
            <shortName>GLP-1</shortName>
        </recommendedName>
    </component>
    <component>
        <recommendedName>
            <fullName>Glucagon-like peptide 1(7-37)</fullName>
            <shortName>GLP-1(7-37)</shortName>
        </recommendedName>
    </component>
    <component>
        <recommendedName>
            <fullName>Glucagon-like peptide 1(7-36)</fullName>
            <shortName>GLP-1(7-36)</shortName>
        </recommendedName>
    </component>
    <component>
        <recommendedName>
            <fullName>Glucagon-like peptide 2</fullName>
            <shortName>GLP-2</shortName>
        </recommendedName>
    </component>
</protein>
<proteinExistence type="evidence at protein level"/>
<organism>
    <name type="scientific">Sus scrofa</name>
    <name type="common">Pig</name>
    <dbReference type="NCBI Taxonomy" id="9823"/>
    <lineage>
        <taxon>Eukaryota</taxon>
        <taxon>Metazoa</taxon>
        <taxon>Chordata</taxon>
        <taxon>Craniata</taxon>
        <taxon>Vertebrata</taxon>
        <taxon>Euteleostomi</taxon>
        <taxon>Mammalia</taxon>
        <taxon>Eutheria</taxon>
        <taxon>Laurasiatheria</taxon>
        <taxon>Artiodactyla</taxon>
        <taxon>Suina</taxon>
        <taxon>Suidae</taxon>
        <taxon>Sus</taxon>
    </lineage>
</organism>
<gene>
    <name type="primary">GCG</name>
</gene>
<feature type="signal peptide" evidence="10 11">
    <location>
        <begin position="1"/>
        <end position="20"/>
    </location>
</feature>
<feature type="peptide" id="PRO_0000011293" description="Glicentin" evidence="10 11">
    <location>
        <begin position="21"/>
        <end position="89"/>
    </location>
</feature>
<feature type="peptide" id="PRO_0000011294" description="Glicentin-related polypeptide" evidence="4">
    <location>
        <begin position="21"/>
        <end position="50"/>
    </location>
</feature>
<feature type="peptide" id="PRO_0000011295" description="Oxyntomodulin" evidence="3">
    <location>
        <begin position="53"/>
        <end position="89"/>
    </location>
</feature>
<feature type="peptide" id="PRO_0000011296" description="Glucagon" evidence="12">
    <location>
        <begin position="53"/>
        <end position="81"/>
    </location>
</feature>
<feature type="propeptide" id="PRO_0000011297" evidence="2">
    <location>
        <begin position="84"/>
        <end position="89"/>
    </location>
</feature>
<feature type="peptide" id="PRO_0000011298" description="Glucagon-like peptide 1" evidence="8">
    <location>
        <begin position="92"/>
        <end position="128"/>
    </location>
</feature>
<feature type="peptide" id="PRO_0000011299" description="Glucagon-like peptide 1(7-37)" evidence="8">
    <location>
        <begin position="98"/>
        <end position="128"/>
    </location>
</feature>
<feature type="peptide" id="PRO_0000011300" description="Glucagon-like peptide 1(7-36)" evidence="8">
    <location>
        <begin position="98"/>
        <end position="127"/>
    </location>
</feature>
<feature type="propeptide" id="PRO_0000011301" evidence="5">
    <location>
        <begin position="131"/>
        <end position="145"/>
    </location>
</feature>
<feature type="peptide" id="PRO_0000011302" description="Glucagon-like peptide 2" evidence="5">
    <location>
        <begin position="146"/>
        <end position="180"/>
    </location>
</feature>
<feature type="region of interest" description="Disordered" evidence="7">
    <location>
        <begin position="25"/>
        <end position="59"/>
    </location>
</feature>
<feature type="site" description="Cleavage; by PCSK2" evidence="1">
    <location>
        <begin position="52"/>
        <end position="53"/>
    </location>
</feature>
<feature type="site" description="Cleavage; by PCSK1 and PCSK2" evidence="1">
    <location>
        <begin position="83"/>
        <end position="84"/>
    </location>
</feature>
<feature type="site" description="Cleavage; by PCSK1" evidence="1">
    <location>
        <begin position="91"/>
        <end position="92"/>
    </location>
</feature>
<feature type="site" description="Cleavage; by PCSK1" evidence="1">
    <location>
        <begin position="97"/>
        <end position="98"/>
    </location>
</feature>
<feature type="site" description="Cleavage; by PCSK1" evidence="1">
    <location>
        <begin position="130"/>
        <end position="131"/>
    </location>
</feature>
<feature type="site" description="Cleavage; by PCSK1" evidence="1">
    <location>
        <begin position="145"/>
        <end position="146"/>
    </location>
</feature>
<feature type="modified residue" description="Phosphoserine" evidence="6">
    <location>
        <position position="54"/>
    </location>
</feature>
<feature type="modified residue" description="Phosphoserine" evidence="6">
    <location>
        <position position="105"/>
    </location>
</feature>
<feature type="modified residue" description="Phosphoserine" evidence="6">
    <location>
        <position position="108"/>
    </location>
</feature>
<feature type="modified residue" description="Arginine amide" evidence="1">
    <location>
        <position position="127"/>
    </location>
</feature>
<feature type="modified residue" description="Phosphoserine" evidence="6">
    <location>
        <position position="150"/>
    </location>
</feature>
<feature type="modified residue" description="Phosphoserine" evidence="6">
    <location>
        <position position="152"/>
    </location>
</feature>
<feature type="sequence conflict" description="In Ref. 6; AA sequence." evidence="13" ref="6">
    <original>R</original>
    <variation>G</variation>
    <location>
        <position position="143"/>
    </location>
</feature>
<feature type="helix" evidence="14">
    <location>
        <begin position="59"/>
        <end position="62"/>
    </location>
</feature>
<feature type="turn" evidence="14">
    <location>
        <begin position="63"/>
        <end position="65"/>
    </location>
</feature>
<feature type="helix" evidence="14">
    <location>
        <begin position="66"/>
        <end position="75"/>
    </location>
</feature>
<dbReference type="EMBL" id="AY242124">
    <property type="protein sequence ID" value="AAO88211.1"/>
    <property type="molecule type" value="mRNA"/>
</dbReference>
<dbReference type="RefSeq" id="NP_999489.1">
    <property type="nucleotide sequence ID" value="NM_214324.1"/>
</dbReference>
<dbReference type="RefSeq" id="XP_005671939.2">
    <property type="nucleotide sequence ID" value="XM_005671882.3"/>
</dbReference>
<dbReference type="PDB" id="1GCN">
    <property type="method" value="X-ray"/>
    <property type="resolution" value="3.00 A"/>
    <property type="chains" value="A=53-81"/>
</dbReference>
<dbReference type="PDB" id="7LLY">
    <property type="method" value="EM"/>
    <property type="resolution" value="3.30 A"/>
    <property type="chains" value="P=53-89"/>
</dbReference>
<dbReference type="PDBsum" id="1GCN"/>
<dbReference type="PDBsum" id="7LLY"/>
<dbReference type="BMRB" id="P01274"/>
<dbReference type="EMDB" id="EMD-23436"/>
<dbReference type="SMR" id="P01274"/>
<dbReference type="FunCoup" id="P01274">
    <property type="interactions" value="83"/>
</dbReference>
<dbReference type="STRING" id="9823.ENSSSCP00000016844"/>
<dbReference type="PaxDb" id="9823-ENSSSCP00000016844"/>
<dbReference type="PeptideAtlas" id="P01274"/>
<dbReference type="Ensembl" id="ENSSSCT00000017307.5">
    <property type="protein sequence ID" value="ENSSSCP00000016844.3"/>
    <property type="gene ID" value="ENSSSCG00000015895.5"/>
</dbReference>
<dbReference type="Ensembl" id="ENSSSCT00015017002.1">
    <property type="protein sequence ID" value="ENSSSCP00015006642.1"/>
    <property type="gene ID" value="ENSSSCG00015012899.1"/>
</dbReference>
<dbReference type="Ensembl" id="ENSSSCT00025079210.1">
    <property type="protein sequence ID" value="ENSSSCP00025034389.1"/>
    <property type="gene ID" value="ENSSSCG00025057867.1"/>
</dbReference>
<dbReference type="Ensembl" id="ENSSSCT00030026681.1">
    <property type="protein sequence ID" value="ENSSSCP00030011918.1"/>
    <property type="gene ID" value="ENSSSCG00030019310.1"/>
</dbReference>
<dbReference type="Ensembl" id="ENSSSCT00035026829.1">
    <property type="protein sequence ID" value="ENSSSCP00035010233.1"/>
    <property type="gene ID" value="ENSSSCG00035020634.1"/>
</dbReference>
<dbReference type="Ensembl" id="ENSSSCT00040101992.1">
    <property type="protein sequence ID" value="ENSSSCP00040046023.1"/>
    <property type="gene ID" value="ENSSSCG00040073844.1"/>
</dbReference>
<dbReference type="Ensembl" id="ENSSSCT00045005515.1">
    <property type="protein sequence ID" value="ENSSSCP00045003690.1"/>
    <property type="gene ID" value="ENSSSCG00045003381.1"/>
</dbReference>
<dbReference type="Ensembl" id="ENSSSCT00050030944.1">
    <property type="protein sequence ID" value="ENSSSCP00050012912.1"/>
    <property type="gene ID" value="ENSSSCG00050022916.1"/>
</dbReference>
<dbReference type="Ensembl" id="ENSSSCT00055041841.1">
    <property type="protein sequence ID" value="ENSSSCP00055033310.1"/>
    <property type="gene ID" value="ENSSSCG00055021297.1"/>
</dbReference>
<dbReference type="Ensembl" id="ENSSSCT00060013577.1">
    <property type="protein sequence ID" value="ENSSSCP00060005199.1"/>
    <property type="gene ID" value="ENSSSCG00060010447.1"/>
</dbReference>
<dbReference type="Ensembl" id="ENSSSCT00065107745.1">
    <property type="protein sequence ID" value="ENSSSCP00065048044.1"/>
    <property type="gene ID" value="ENSSSCG00065077860.1"/>
</dbReference>
<dbReference type="Ensembl" id="ENSSSCT00070050959.1">
    <property type="protein sequence ID" value="ENSSSCP00070043082.1"/>
    <property type="gene ID" value="ENSSSCG00070025495.1"/>
</dbReference>
<dbReference type="Ensembl" id="ENSSSCT00085025833">
    <property type="protein sequence ID" value="ENSSSCP00085017936"/>
    <property type="gene ID" value="ENSSSCG00085013619"/>
</dbReference>
<dbReference type="Ensembl" id="ENSSSCT00090027111">
    <property type="protein sequence ID" value="ENSSSCP00090016707"/>
    <property type="gene ID" value="ENSSSCG00090015437"/>
</dbReference>
<dbReference type="Ensembl" id="ENSSSCT00105058363">
    <property type="protein sequence ID" value="ENSSSCP00105041160"/>
    <property type="gene ID" value="ENSSSCG00105030755"/>
</dbReference>
<dbReference type="Ensembl" id="ENSSSCT00110023074">
    <property type="protein sequence ID" value="ENSSSCP00110015702"/>
    <property type="gene ID" value="ENSSSCG00110011961"/>
</dbReference>
<dbReference type="Ensembl" id="ENSSSCT00115002587">
    <property type="protein sequence ID" value="ENSSSCP00115002410"/>
    <property type="gene ID" value="ENSSSCG00115001524"/>
</dbReference>
<dbReference type="Ensembl" id="ENSSSCT00130061046">
    <property type="protein sequence ID" value="ENSSSCP00130043778"/>
    <property type="gene ID" value="ENSSSCG00130031262"/>
</dbReference>
<dbReference type="GeneID" id="397595"/>
<dbReference type="KEGG" id="ssc:397595"/>
<dbReference type="CTD" id="2641"/>
<dbReference type="VGNC" id="VGNC:96317">
    <property type="gene designation" value="GCG"/>
</dbReference>
<dbReference type="eggNOG" id="ENOG502RYPR">
    <property type="taxonomic scope" value="Eukaryota"/>
</dbReference>
<dbReference type="GeneTree" id="ENSGT00390000005372"/>
<dbReference type="InParanoid" id="P01274"/>
<dbReference type="OMA" id="MNTKRNX"/>
<dbReference type="OrthoDB" id="9904258at2759"/>
<dbReference type="Reactome" id="R-SSC-163359">
    <property type="pathway name" value="Glucagon signaling in metabolic regulation"/>
</dbReference>
<dbReference type="Reactome" id="R-SSC-381676">
    <property type="pathway name" value="Glucagon-like Peptide-1 (GLP1) regulates insulin secretion"/>
</dbReference>
<dbReference type="Reactome" id="R-SSC-381771">
    <property type="pathway name" value="Synthesis, secretion, and inactivation of Glucagon-like Peptide-1 (GLP-1)"/>
</dbReference>
<dbReference type="Reactome" id="R-SSC-416476">
    <property type="pathway name" value="G alpha (q) signalling events"/>
</dbReference>
<dbReference type="Reactome" id="R-SSC-418555">
    <property type="pathway name" value="G alpha (s) signalling events"/>
</dbReference>
<dbReference type="Reactome" id="R-SSC-420092">
    <property type="pathway name" value="Glucagon-type ligand receptors"/>
</dbReference>
<dbReference type="Reactome" id="R-SSC-422085">
    <property type="pathway name" value="Synthesis, secretion, and deacylation of Ghrelin"/>
</dbReference>
<dbReference type="EvolutionaryTrace" id="P01274"/>
<dbReference type="Proteomes" id="UP000008227">
    <property type="component" value="Chromosome 15"/>
</dbReference>
<dbReference type="Proteomes" id="UP000314985">
    <property type="component" value="Chromosome 15"/>
</dbReference>
<dbReference type="Proteomes" id="UP000694570">
    <property type="component" value="Unplaced"/>
</dbReference>
<dbReference type="Proteomes" id="UP000694571">
    <property type="component" value="Unplaced"/>
</dbReference>
<dbReference type="Proteomes" id="UP000694720">
    <property type="component" value="Unplaced"/>
</dbReference>
<dbReference type="Proteomes" id="UP000694722">
    <property type="component" value="Unplaced"/>
</dbReference>
<dbReference type="Proteomes" id="UP000694723">
    <property type="component" value="Unplaced"/>
</dbReference>
<dbReference type="Proteomes" id="UP000694724">
    <property type="component" value="Unplaced"/>
</dbReference>
<dbReference type="Proteomes" id="UP000694725">
    <property type="component" value="Unplaced"/>
</dbReference>
<dbReference type="Proteomes" id="UP000694726">
    <property type="component" value="Unplaced"/>
</dbReference>
<dbReference type="Proteomes" id="UP000694727">
    <property type="component" value="Unplaced"/>
</dbReference>
<dbReference type="Proteomes" id="UP000694728">
    <property type="component" value="Unplaced"/>
</dbReference>
<dbReference type="Bgee" id="ENSSSCG00000015895">
    <property type="expression patterns" value="Expressed in ileum and 8 other cell types or tissues"/>
</dbReference>
<dbReference type="GO" id="GO:0005737">
    <property type="term" value="C:cytoplasm"/>
    <property type="evidence" value="ECO:0007669"/>
    <property type="project" value="Ensembl"/>
</dbReference>
<dbReference type="GO" id="GO:0005615">
    <property type="term" value="C:extracellular space"/>
    <property type="evidence" value="ECO:0000250"/>
    <property type="project" value="UniProtKB"/>
</dbReference>
<dbReference type="GO" id="GO:0005886">
    <property type="term" value="C:plasma membrane"/>
    <property type="evidence" value="ECO:0007669"/>
    <property type="project" value="Ensembl"/>
</dbReference>
<dbReference type="GO" id="GO:0031769">
    <property type="term" value="F:glucagon receptor binding"/>
    <property type="evidence" value="ECO:0000318"/>
    <property type="project" value="GO_Central"/>
</dbReference>
<dbReference type="GO" id="GO:0005179">
    <property type="term" value="F:hormone activity"/>
    <property type="evidence" value="ECO:0000318"/>
    <property type="project" value="GO_Central"/>
</dbReference>
<dbReference type="GO" id="GO:0042802">
    <property type="term" value="F:identical protein binding"/>
    <property type="evidence" value="ECO:0007669"/>
    <property type="project" value="Ensembl"/>
</dbReference>
<dbReference type="GO" id="GO:0007189">
    <property type="term" value="P:adenylate cyclase-activating G protein-coupled receptor signaling pathway"/>
    <property type="evidence" value="ECO:0007669"/>
    <property type="project" value="Ensembl"/>
</dbReference>
<dbReference type="GO" id="GO:0007188">
    <property type="term" value="P:adenylate cyclase-modulating G protein-coupled receptor signaling pathway"/>
    <property type="evidence" value="ECO:0000318"/>
    <property type="project" value="GO_Central"/>
</dbReference>
<dbReference type="GO" id="GO:0071377">
    <property type="term" value="P:cellular response to glucagon stimulus"/>
    <property type="evidence" value="ECO:0007669"/>
    <property type="project" value="Ensembl"/>
</dbReference>
<dbReference type="GO" id="GO:0006094">
    <property type="term" value="P:gluconeogenesis"/>
    <property type="evidence" value="ECO:0007669"/>
    <property type="project" value="Ensembl"/>
</dbReference>
<dbReference type="GO" id="GO:0042593">
    <property type="term" value="P:glucose homeostasis"/>
    <property type="evidence" value="ECO:0000250"/>
    <property type="project" value="UniProtKB"/>
</dbReference>
<dbReference type="GO" id="GO:0043066">
    <property type="term" value="P:negative regulation of apoptotic process"/>
    <property type="evidence" value="ECO:0000318"/>
    <property type="project" value="GO_Central"/>
</dbReference>
<dbReference type="GO" id="GO:1900118">
    <property type="term" value="P:negative regulation of execution phase of apoptosis"/>
    <property type="evidence" value="ECO:0007669"/>
    <property type="project" value="Ensembl"/>
</dbReference>
<dbReference type="GO" id="GO:0090280">
    <property type="term" value="P:positive regulation of calcium ion import"/>
    <property type="evidence" value="ECO:0007669"/>
    <property type="project" value="Ensembl"/>
</dbReference>
<dbReference type="GO" id="GO:0070374">
    <property type="term" value="P:positive regulation of ERK1 and ERK2 cascade"/>
    <property type="evidence" value="ECO:0007669"/>
    <property type="project" value="Ensembl"/>
</dbReference>
<dbReference type="GO" id="GO:0045722">
    <property type="term" value="P:positive regulation of gluconeogenesis"/>
    <property type="evidence" value="ECO:0007669"/>
    <property type="project" value="Ensembl"/>
</dbReference>
<dbReference type="GO" id="GO:0035774">
    <property type="term" value="P:positive regulation of insulin secretion involved in cellular response to glucose stimulus"/>
    <property type="evidence" value="ECO:0000318"/>
    <property type="project" value="GO_Central"/>
</dbReference>
<dbReference type="GO" id="GO:0010737">
    <property type="term" value="P:protein kinase A signaling"/>
    <property type="evidence" value="ECO:0000318"/>
    <property type="project" value="GO_Central"/>
</dbReference>
<dbReference type="GO" id="GO:0050796">
    <property type="term" value="P:regulation of insulin secretion"/>
    <property type="evidence" value="ECO:0000250"/>
    <property type="project" value="UniProtKB"/>
</dbReference>
<dbReference type="GO" id="GO:0014823">
    <property type="term" value="P:response to activity"/>
    <property type="evidence" value="ECO:0000250"/>
    <property type="project" value="UniProtKB"/>
</dbReference>
<dbReference type="Gene3D" id="6.10.250.590">
    <property type="match status" value="3"/>
</dbReference>
<dbReference type="InterPro" id="IPR015550">
    <property type="entry name" value="Glucagon"/>
</dbReference>
<dbReference type="InterPro" id="IPR000532">
    <property type="entry name" value="Glucagon_GIP_secretin_VIP"/>
</dbReference>
<dbReference type="PANTHER" id="PTHR11418">
    <property type="entry name" value="GLUCAGON"/>
    <property type="match status" value="1"/>
</dbReference>
<dbReference type="PANTHER" id="PTHR11418:SF0">
    <property type="entry name" value="PRO-GLUCAGON"/>
    <property type="match status" value="1"/>
</dbReference>
<dbReference type="Pfam" id="PF00123">
    <property type="entry name" value="Hormone_2"/>
    <property type="match status" value="3"/>
</dbReference>
<dbReference type="PRINTS" id="PR00275">
    <property type="entry name" value="GLUCAGON"/>
</dbReference>
<dbReference type="SMART" id="SM00070">
    <property type="entry name" value="GLUCA"/>
    <property type="match status" value="3"/>
</dbReference>
<dbReference type="PROSITE" id="PS00260">
    <property type="entry name" value="GLUCAGON"/>
    <property type="match status" value="4"/>
</dbReference>
<sequence length="180" mass="21029">MKTIYFVAGLFVMLVQGSWQRSLQNTEEKSRSFPAPQTDPLDDPDQMTEDKRHSQGTFTSDYSKYLDSRRAQDFVQWLMNTKRNKNNIAKRHDEFERHAEGTFTSDVSSYLEGQAAKEFIAWLVKGRGRRDFPEEVTIVEELRRRHADGSFSDEMNTVLDNLATRDFINWLLHTKITDSL</sequence>
<reference key="1">
    <citation type="submission" date="2003-02" db="EMBL/GenBank/DDBJ databases">
        <title>Cloning of porcine proglucagon.</title>
        <authorList>
            <person name="Siggers R.H."/>
            <person name="Goldade B.G."/>
            <person name="Laarveld B."/>
            <person name="Van Kessel A.G."/>
        </authorList>
    </citation>
    <scope>NUCLEOTIDE SEQUENCE [MRNA]</scope>
    <source>
        <tissue>Pancreas</tissue>
        <tissue>Small intestine</tissue>
    </source>
</reference>
<reference key="2">
    <citation type="journal article" date="1981" name="Regul. Pept.">
        <title>The primary structure of porcine glicentin (proglucagon).</title>
        <authorList>
            <person name="Thim L."/>
            <person name="Moody A.J."/>
        </authorList>
    </citation>
    <scope>PROTEIN SEQUENCE OF 21-89</scope>
</reference>
<reference key="3">
    <citation type="journal article" date="1981" name="Peptides 2 Suppl.">
        <title>The amino acid sequence of porcine glicentin.</title>
        <authorList>
            <person name="Thim L."/>
            <person name="Moody A.J."/>
        </authorList>
    </citation>
    <scope>PROTEIN SEQUENCE OF 21-89</scope>
</reference>
<reference key="4">
    <citation type="journal article" date="1957" name="J. Am. Chem. Soc.">
        <title>The amino acid sequence of glucagon. V. Location of amide groups, acid degradation studies and summary of sequential evidence.</title>
        <authorList>
            <person name="Bromer W.W."/>
            <person name="Sinn L.G."/>
            <person name="Behrens O.K."/>
        </authorList>
    </citation>
    <scope>PROTEIN SEQUENCE OF 53-81</scope>
</reference>
<reference key="5">
    <citation type="journal article" date="1989" name="J. Biol. Chem.">
        <title>Complete sequences of glucagon-like peptide-1 from human and pig small intestine.</title>
        <authorList>
            <person name="Orskov C."/>
            <person name="Bersani M."/>
            <person name="Johnsen A.H."/>
            <person name="Hoejrup P."/>
            <person name="Holst J.J."/>
        </authorList>
    </citation>
    <scope>PROTEIN SEQUENCE OF 98-127</scope>
</reference>
<reference key="6">
    <citation type="journal article" date="1988" name="J. Biol. Chem.">
        <title>Naturally occurring products of proglucagon 111-160 in the porcine and human small intestine.</title>
        <authorList>
            <person name="Buhl T."/>
            <person name="Thim L."/>
            <person name="Kofod H."/>
            <person name="Orskov C."/>
            <person name="Harling H."/>
            <person name="Holst J.J."/>
        </authorList>
    </citation>
    <scope>PROTEIN SEQUENCE OF 131-178</scope>
</reference>
<reference key="7">
    <citation type="journal article" date="1986" name="Endocrinology">
        <title>Glucagon-like peptides GLP-1 and GLP-2, predicted products of the glucagon gene, are secreted separately from pig small intestine but not pancreas.</title>
        <authorList>
            <person name="Orskov C."/>
            <person name="Holst J.J."/>
            <person name="Knuhtsen S."/>
            <person name="Baldissera F.G."/>
            <person name="Poulsen S.S."/>
            <person name="Nielsen O.V."/>
        </authorList>
    </citation>
    <scope>TISSUE SPECIFICITY</scope>
</reference>
<reference key="8">
    <citation type="journal article" date="2003" name="Mol. Endocrinol.">
        <title>Glucagon-like peptides: regulators of cell proliferation, differentiation, and apoptosis.</title>
        <authorList>
            <person name="Drucker D.J."/>
        </authorList>
    </citation>
    <scope>REVIEW</scope>
</reference>
<reference key="9">
    <citation type="journal article" date="2003" name="Am. J. Physiol.">
        <title>Glucagon and regulation of glucose metabolism.</title>
        <authorList>
            <person name="Jiang G."/>
            <person name="Zhang B.B."/>
        </authorList>
    </citation>
    <scope>REVIEW</scope>
</reference>
<reference key="10">
    <citation type="journal article" date="1999" name="Trends Endocrinol. Metab.">
        <title>Glucagon-like peptide 2.</title>
        <authorList>
            <person name="Drucker D.J."/>
        </authorList>
    </citation>
    <scope>REVIEW</scope>
</reference>
<reference key="11">
    <citation type="journal article" date="1999" name="Endocr. Rev.">
        <title>The glucagon-like peptides.</title>
        <authorList>
            <person name="Kieffer T.J."/>
            <person name="Habener J.F."/>
        </authorList>
    </citation>
    <scope>REVIEW</scope>
</reference>
<reference key="12">
    <citation type="journal article" date="1975" name="Nature">
        <title>X-ray analysis of glucagon and its relationship to receptor binding.</title>
        <authorList>
            <person name="Sasaki K."/>
            <person name="Dockerill S."/>
            <person name="Adamiak D.A."/>
            <person name="Tickle I.J."/>
            <person name="Blundell T.L."/>
        </authorList>
    </citation>
    <scope>X-RAY CRYSTALLOGRAPHY (3.0 ANGSTROMS) OF 53-81</scope>
</reference>
<keyword id="KW-0002">3D-structure</keyword>
<keyword id="KW-0027">Amidation</keyword>
<keyword id="KW-0165">Cleavage on pair of basic residues</keyword>
<keyword id="KW-0903">Direct protein sequencing</keyword>
<keyword id="KW-0372">Hormone</keyword>
<keyword id="KW-0597">Phosphoprotein</keyword>
<keyword id="KW-1185">Reference proteome</keyword>
<keyword id="KW-0964">Secreted</keyword>
<keyword id="KW-0732">Signal</keyword>
<name>GLUC_PIG</name>